<proteinExistence type="evidence at protein level"/>
<evidence type="ECO:0000250" key="1"/>
<evidence type="ECO:0000256" key="2">
    <source>
        <dbReference type="SAM" id="MobiDB-lite"/>
    </source>
</evidence>
<evidence type="ECO:0000269" key="3">
    <source>
    </source>
</evidence>
<evidence type="ECO:0000269" key="4">
    <source>
    </source>
</evidence>
<evidence type="ECO:0000305" key="5"/>
<name>ILVB1_TOBAC</name>
<comment type="catalytic activity">
    <reaction>
        <text>2 pyruvate + H(+) = (2S)-2-acetolactate + CO2</text>
        <dbReference type="Rhea" id="RHEA:25249"/>
        <dbReference type="ChEBI" id="CHEBI:15361"/>
        <dbReference type="ChEBI" id="CHEBI:15378"/>
        <dbReference type="ChEBI" id="CHEBI:16526"/>
        <dbReference type="ChEBI" id="CHEBI:58476"/>
        <dbReference type="EC" id="2.2.1.6"/>
    </reaction>
</comment>
<comment type="cofactor">
    <cofactor evidence="1">
        <name>Mg(2+)</name>
        <dbReference type="ChEBI" id="CHEBI:18420"/>
    </cofactor>
    <text evidence="1">Binds 1 Mg(2+) ion per subunit.</text>
</comment>
<comment type="cofactor">
    <cofactor evidence="1">
        <name>thiamine diphosphate</name>
        <dbReference type="ChEBI" id="CHEBI:58937"/>
    </cofactor>
    <text evidence="1">Binds 1 thiamine pyrophosphate per subunit.</text>
</comment>
<comment type="pathway">
    <text>Amino-acid biosynthesis; L-isoleucine biosynthesis; L-isoleucine from 2-oxobutanoate: step 1/4.</text>
</comment>
<comment type="pathway">
    <text>Amino-acid biosynthesis; L-valine biosynthesis; L-valine from pyruvate: step 1/4.</text>
</comment>
<comment type="subcellular location">
    <subcellularLocation>
        <location>Plastid</location>
        <location>Chloroplast</location>
    </subcellularLocation>
</comment>
<comment type="miscellaneous">
    <text>There are two distinct ALS genes in tobacco. The enzyme shown here is derived from the ALS gene on locus SuRA.</text>
</comment>
<comment type="miscellaneous">
    <text>Acetolactate synthase is the target enzyme for sulfonylurea and imidazolinone herbicides.</text>
</comment>
<comment type="similarity">
    <text evidence="5">Belongs to the TPP enzyme family.</text>
</comment>
<sequence>MAAAAPSPSSSAFSKTLSPSSSTSSTLLPRSTFPFPHHPHKTTPPPLHLTHTHIHIHSQRRRFTISNVISTNQKVSQTEKTETFVSRFAPDEPRKGSDVLVEALEREGVTDVFAYPGGASMEIHQALTRSSIIRNVLPRHEQGGVFAAEGYARATGFPGVCIATSGPGATNLVSGLADALLDSVPIVAITGQVPRRMIGTDAFQETPIVEVTRSITKHNYLVMDVEDIPRVVREAFFLARSGRPGPILIDVPKDIQQQLVIPDWDQPMRLPGYMSRLPKLPNEMLLEQIVRLISESKKPVLYVGGGCSQSSEDLRRFVELTGIPVASTLMGLGAFPTGDELSLSMLGMHGTVYANYAVDSSDLLLAFGVRFDDRVTGKLEAFASRAKIVHIDIDSAEIGKNKQPHVSICADIKLALQGLNSILESKEGKLKLDFSAWRQELTEQKVKHPLNFKTFGDAIPPQYAIQVLDELTNGNAIISTGVGQHQMWAAQYYKYRKPRQWLTSGGLGAMGFGLPAAIGAAVGRPDEVVVDIDGDGSFIMNVQELATIKVENLPVKIMLLNNQHLGMVVQWEDRFYKANRAHTYLGNPSNEAEIFPNMLKFAEACGVPAARVTHRDDLRAAIQKMLDTPGPYLLDVIVPHQEHVLPMIPSGGAFKDVITEGDGRSSY</sequence>
<protein>
    <recommendedName>
        <fullName>Acetolactate synthase 1, chloroplastic</fullName>
        <ecNumber>2.2.1.6</ecNumber>
    </recommendedName>
    <alternativeName>
        <fullName>ALS I</fullName>
    </alternativeName>
    <alternativeName>
        <fullName>Acetohydroxy-acid synthase I</fullName>
    </alternativeName>
    <alternativeName>
        <fullName>Acetolactate synthase I</fullName>
    </alternativeName>
</protein>
<dbReference type="EC" id="2.2.1.6"/>
<dbReference type="EMBL" id="X07644">
    <property type="protein sequence ID" value="CAA30484.1"/>
    <property type="molecule type" value="Genomic_DNA"/>
</dbReference>
<dbReference type="PIR" id="S00545">
    <property type="entry name" value="YCNT1"/>
</dbReference>
<dbReference type="SMR" id="P09342"/>
<dbReference type="STRING" id="4097.P09342"/>
<dbReference type="PaxDb" id="4097-P09342"/>
<dbReference type="SABIO-RK" id="P09342"/>
<dbReference type="UniPathway" id="UPA00047">
    <property type="reaction ID" value="UER00055"/>
</dbReference>
<dbReference type="UniPathway" id="UPA00049">
    <property type="reaction ID" value="UER00059"/>
</dbReference>
<dbReference type="Proteomes" id="UP000084051">
    <property type="component" value="Unplaced"/>
</dbReference>
<dbReference type="GO" id="GO:0005948">
    <property type="term" value="C:acetolactate synthase complex"/>
    <property type="evidence" value="ECO:0000318"/>
    <property type="project" value="GO_Central"/>
</dbReference>
<dbReference type="GO" id="GO:0009507">
    <property type="term" value="C:chloroplast"/>
    <property type="evidence" value="ECO:0007669"/>
    <property type="project" value="UniProtKB-SubCell"/>
</dbReference>
<dbReference type="GO" id="GO:0003984">
    <property type="term" value="F:acetolactate synthase activity"/>
    <property type="evidence" value="ECO:0000318"/>
    <property type="project" value="GO_Central"/>
</dbReference>
<dbReference type="GO" id="GO:0050660">
    <property type="term" value="F:flavin adenine dinucleotide binding"/>
    <property type="evidence" value="ECO:0000318"/>
    <property type="project" value="GO_Central"/>
</dbReference>
<dbReference type="GO" id="GO:0000287">
    <property type="term" value="F:magnesium ion binding"/>
    <property type="evidence" value="ECO:0007669"/>
    <property type="project" value="InterPro"/>
</dbReference>
<dbReference type="GO" id="GO:0030976">
    <property type="term" value="F:thiamine pyrophosphate binding"/>
    <property type="evidence" value="ECO:0007669"/>
    <property type="project" value="InterPro"/>
</dbReference>
<dbReference type="GO" id="GO:0009097">
    <property type="term" value="P:isoleucine biosynthetic process"/>
    <property type="evidence" value="ECO:0000318"/>
    <property type="project" value="GO_Central"/>
</dbReference>
<dbReference type="GO" id="GO:0009099">
    <property type="term" value="P:L-valine biosynthetic process"/>
    <property type="evidence" value="ECO:0000318"/>
    <property type="project" value="GO_Central"/>
</dbReference>
<dbReference type="GO" id="GO:0009635">
    <property type="term" value="P:response to herbicide"/>
    <property type="evidence" value="ECO:0007669"/>
    <property type="project" value="UniProtKB-KW"/>
</dbReference>
<dbReference type="CDD" id="cd02015">
    <property type="entry name" value="TPP_AHAS"/>
    <property type="match status" value="1"/>
</dbReference>
<dbReference type="CDD" id="cd07035">
    <property type="entry name" value="TPP_PYR_POX_like"/>
    <property type="match status" value="1"/>
</dbReference>
<dbReference type="FunFam" id="3.40.50.1220:FF:000008">
    <property type="entry name" value="Acetolactate synthase"/>
    <property type="match status" value="1"/>
</dbReference>
<dbReference type="FunFam" id="3.40.50.970:FF:000007">
    <property type="entry name" value="Acetolactate synthase"/>
    <property type="match status" value="1"/>
</dbReference>
<dbReference type="FunFam" id="3.40.50.970:FF:000053">
    <property type="entry name" value="Acetolactate synthase, mitochondrial"/>
    <property type="match status" value="1"/>
</dbReference>
<dbReference type="Gene3D" id="3.40.50.970">
    <property type="match status" value="2"/>
</dbReference>
<dbReference type="Gene3D" id="3.40.50.1220">
    <property type="entry name" value="TPP-binding domain"/>
    <property type="match status" value="1"/>
</dbReference>
<dbReference type="InterPro" id="IPR012846">
    <property type="entry name" value="Acetolactate_synth_lsu"/>
</dbReference>
<dbReference type="InterPro" id="IPR039368">
    <property type="entry name" value="AHAS_TPP"/>
</dbReference>
<dbReference type="InterPro" id="IPR029035">
    <property type="entry name" value="DHS-like_NAD/FAD-binding_dom"/>
</dbReference>
<dbReference type="InterPro" id="IPR029061">
    <property type="entry name" value="THDP-binding"/>
</dbReference>
<dbReference type="InterPro" id="IPR012000">
    <property type="entry name" value="Thiamin_PyroP_enz_cen_dom"/>
</dbReference>
<dbReference type="InterPro" id="IPR012001">
    <property type="entry name" value="Thiamin_PyroP_enz_TPP-bd_dom"/>
</dbReference>
<dbReference type="InterPro" id="IPR000399">
    <property type="entry name" value="TPP-bd_CS"/>
</dbReference>
<dbReference type="InterPro" id="IPR045229">
    <property type="entry name" value="TPP_enz"/>
</dbReference>
<dbReference type="InterPro" id="IPR011766">
    <property type="entry name" value="TPP_enzyme_TPP-bd"/>
</dbReference>
<dbReference type="NCBIfam" id="TIGR00118">
    <property type="entry name" value="acolac_lg"/>
    <property type="match status" value="1"/>
</dbReference>
<dbReference type="PANTHER" id="PTHR18968:SF13">
    <property type="entry name" value="ACETOLACTATE SYNTHASE CATALYTIC SUBUNIT, MITOCHONDRIAL"/>
    <property type="match status" value="1"/>
</dbReference>
<dbReference type="PANTHER" id="PTHR18968">
    <property type="entry name" value="THIAMINE PYROPHOSPHATE ENZYMES"/>
    <property type="match status" value="1"/>
</dbReference>
<dbReference type="Pfam" id="PF02775">
    <property type="entry name" value="TPP_enzyme_C"/>
    <property type="match status" value="1"/>
</dbReference>
<dbReference type="Pfam" id="PF00205">
    <property type="entry name" value="TPP_enzyme_M"/>
    <property type="match status" value="1"/>
</dbReference>
<dbReference type="Pfam" id="PF02776">
    <property type="entry name" value="TPP_enzyme_N"/>
    <property type="match status" value="1"/>
</dbReference>
<dbReference type="SUPFAM" id="SSF52467">
    <property type="entry name" value="DHS-like NAD/FAD-binding domain"/>
    <property type="match status" value="1"/>
</dbReference>
<dbReference type="SUPFAM" id="SSF52518">
    <property type="entry name" value="Thiamin diphosphate-binding fold (THDP-binding)"/>
    <property type="match status" value="2"/>
</dbReference>
<dbReference type="PROSITE" id="PS00187">
    <property type="entry name" value="TPP_ENZYMES"/>
    <property type="match status" value="1"/>
</dbReference>
<accession>P09342</accession>
<feature type="transit peptide" description="Chloroplast">
    <location>
        <begin position="1"/>
        <end position="94"/>
    </location>
</feature>
<feature type="chain" id="PRO_0000035659" description="Acetolactate synthase 1, chloroplastic">
    <location>
        <begin position="95"/>
        <end position="667"/>
    </location>
</feature>
<feature type="region of interest" description="Disordered" evidence="2">
    <location>
        <begin position="1"/>
        <end position="45"/>
    </location>
</feature>
<feature type="region of interest" description="Thiamine pyrophosphate binding">
    <location>
        <begin position="484"/>
        <end position="564"/>
    </location>
</feature>
<feature type="compositionally biased region" description="Low complexity" evidence="2">
    <location>
        <begin position="1"/>
        <end position="35"/>
    </location>
</feature>
<feature type="binding site" evidence="1">
    <location>
        <position position="141"/>
    </location>
    <ligand>
        <name>thiamine diphosphate</name>
        <dbReference type="ChEBI" id="CHEBI:58937"/>
    </ligand>
</feature>
<feature type="binding site" evidence="1">
    <location>
        <position position="243"/>
    </location>
    <ligand>
        <name>FAD</name>
        <dbReference type="ChEBI" id="CHEBI:57692"/>
    </ligand>
</feature>
<feature type="binding site" evidence="1">
    <location>
        <begin position="349"/>
        <end position="370"/>
    </location>
    <ligand>
        <name>FAD</name>
        <dbReference type="ChEBI" id="CHEBI:57692"/>
    </ligand>
</feature>
<feature type="binding site" evidence="1">
    <location>
        <begin position="392"/>
        <end position="411"/>
    </location>
    <ligand>
        <name>FAD</name>
        <dbReference type="ChEBI" id="CHEBI:57692"/>
    </ligand>
</feature>
<feature type="binding site" evidence="1">
    <location>
        <position position="535"/>
    </location>
    <ligand>
        <name>Mg(2+)</name>
        <dbReference type="ChEBI" id="CHEBI:18420"/>
    </ligand>
</feature>
<feature type="binding site" evidence="1">
    <location>
        <position position="562"/>
    </location>
    <ligand>
        <name>Mg(2+)</name>
        <dbReference type="ChEBI" id="CHEBI:18420"/>
    </ligand>
</feature>
<feature type="disulfide bond" evidence="3">
    <location>
        <begin position="161"/>
        <end position="307"/>
    </location>
</feature>
<feature type="mutagenesis site" description="In C3; highly resistant to sulfonylurea herbicides." evidence="4">
    <original>P</original>
    <variation>Q</variation>
    <location>
        <position position="194"/>
    </location>
</feature>
<reference key="1">
    <citation type="journal article" date="1988" name="EMBO J.">
        <title>The molecular basis of sulfonylurea herbicide resistance in tobacco.</title>
        <authorList>
            <person name="Lee K.Y."/>
            <person name="Townsend J."/>
            <person name="Tepperman J."/>
            <person name="Black M."/>
            <person name="Chui C.-F."/>
            <person name="Mazur B."/>
            <person name="Dunsmuir P."/>
            <person name="Bedbrook J."/>
        </authorList>
    </citation>
    <scope>NUCLEOTIDE SEQUENCE [GENOMIC DNA]</scope>
    <scope>MUTAGENESIS OF PRO-194</scope>
</reference>
<reference key="2">
    <citation type="submission" date="1988-08" db="EMBL/GenBank/DDBJ databases">
        <authorList>
            <person name="Lee K.Y."/>
        </authorList>
    </citation>
    <scope>SEQUENCE REVISION</scope>
</reference>
<reference key="3">
    <citation type="journal article" date="2000" name="Biochem. Biophys. Res. Commun.">
        <title>Structural and functional role of cysteinyl residues in tobacco acetolactate synthase.</title>
        <authorList>
            <person name="Shin H.J."/>
            <person name="Chong C.K."/>
            <person name="Chang S.I."/>
            <person name="Choi J.D."/>
        </authorList>
    </citation>
    <scope>DISULFIDE BOND</scope>
</reference>
<gene>
    <name type="primary">ALS SURA</name>
</gene>
<keyword id="KW-0028">Amino-acid biosynthesis</keyword>
<keyword id="KW-0100">Branched-chain amino acid biosynthesis</keyword>
<keyword id="KW-0150">Chloroplast</keyword>
<keyword id="KW-1015">Disulfide bond</keyword>
<keyword id="KW-0274">FAD</keyword>
<keyword id="KW-0285">Flavoprotein</keyword>
<keyword id="KW-0359">Herbicide resistance</keyword>
<keyword id="KW-0460">Magnesium</keyword>
<keyword id="KW-0479">Metal-binding</keyword>
<keyword id="KW-0934">Plastid</keyword>
<keyword id="KW-1185">Reference proteome</keyword>
<keyword id="KW-0786">Thiamine pyrophosphate</keyword>
<keyword id="KW-0808">Transferase</keyword>
<keyword id="KW-0809">Transit peptide</keyword>
<organism>
    <name type="scientific">Nicotiana tabacum</name>
    <name type="common">Common tobacco</name>
    <dbReference type="NCBI Taxonomy" id="4097"/>
    <lineage>
        <taxon>Eukaryota</taxon>
        <taxon>Viridiplantae</taxon>
        <taxon>Streptophyta</taxon>
        <taxon>Embryophyta</taxon>
        <taxon>Tracheophyta</taxon>
        <taxon>Spermatophyta</taxon>
        <taxon>Magnoliopsida</taxon>
        <taxon>eudicotyledons</taxon>
        <taxon>Gunneridae</taxon>
        <taxon>Pentapetalae</taxon>
        <taxon>asterids</taxon>
        <taxon>lamiids</taxon>
        <taxon>Solanales</taxon>
        <taxon>Solanaceae</taxon>
        <taxon>Nicotianoideae</taxon>
        <taxon>Nicotianeae</taxon>
        <taxon>Nicotiana</taxon>
    </lineage>
</organism>